<comment type="function">
    <text>Tubulin is the major constituent of microtubules, a cylinder consisting of laterally associated linear protofilaments composed of alpha- and beta-tubulin heterodimers. Microtubules grow by the addition of GTP-tubulin dimers to the microtubule end, where a stabilizing cap forms. Below the cap, tubulin dimers are in GDP-bound state, owing to GTPase activity of alpha-tubulin.</text>
</comment>
<comment type="catalytic activity">
    <reaction evidence="2">
        <text>GTP + H2O = GDP + phosphate + H(+)</text>
        <dbReference type="Rhea" id="RHEA:19669"/>
        <dbReference type="ChEBI" id="CHEBI:15377"/>
        <dbReference type="ChEBI" id="CHEBI:15378"/>
        <dbReference type="ChEBI" id="CHEBI:37565"/>
        <dbReference type="ChEBI" id="CHEBI:43474"/>
        <dbReference type="ChEBI" id="CHEBI:58189"/>
    </reaction>
    <physiologicalReaction direction="left-to-right" evidence="2">
        <dbReference type="Rhea" id="RHEA:19670"/>
    </physiologicalReaction>
</comment>
<comment type="cofactor">
    <cofactor evidence="2">
        <name>Mg(2+)</name>
        <dbReference type="ChEBI" id="CHEBI:18420"/>
    </cofactor>
</comment>
<comment type="subunit">
    <text>Dimer of alpha and beta chains. A typical microtubule is a hollow water-filled tube with an outer diameter of 25 nm and an inner diameter of 15 nM. Alpha-beta heterodimers associate head-to-tail to form protofilaments running lengthwise along the microtubule wall with the beta-tubulin subunit facing the microtubule plus end conferring a structural polarity. Microtubules usually have 13 protofilaments but different protofilament numbers can be found in some organisms and specialized cells.</text>
</comment>
<comment type="subcellular location">
    <subcellularLocation>
        <location>Cytoplasm</location>
        <location>Cytoskeleton</location>
    </subcellularLocation>
</comment>
<comment type="PTM">
    <text evidence="1">Undergoes a tyrosination/detyrosination cycle, the cyclic removal and re-addition of a C-terminal tyrosine residue by the enzymes tubulin tyrosine carboxypeptidase (TTCP) and tubulin tyrosine ligase (TTL), respectively.</text>
</comment>
<comment type="PTM">
    <text evidence="1">Acetylation of alpha chains at Lys-40 stabilizes microtubules and affects affinity and processivity of microtubule motors. This modification has a role in multiple cellular functions, ranging from cell motility, cell cycle progression or cell differentiation to intracellular trafficking and signaling (By similarity).</text>
</comment>
<comment type="similarity">
    <text evidence="4">Belongs to the tubulin family.</text>
</comment>
<proteinExistence type="evidence at transcript level"/>
<protein>
    <recommendedName>
        <fullName>Tubulin alpha-2 chain</fullName>
        <ecNumber evidence="2">3.6.5.-</ecNumber>
    </recommendedName>
</protein>
<keyword id="KW-0007">Acetylation</keyword>
<keyword id="KW-0963">Cytoplasm</keyword>
<keyword id="KW-0206">Cytoskeleton</keyword>
<keyword id="KW-0342">GTP-binding</keyword>
<keyword id="KW-0378">Hydrolase</keyword>
<keyword id="KW-0460">Magnesium</keyword>
<keyword id="KW-0479">Metal-binding</keyword>
<keyword id="KW-0493">Microtubule</keyword>
<keyword id="KW-0547">Nucleotide-binding</keyword>
<organism>
    <name type="scientific">Pelvetia fastigiata</name>
    <name type="common">Brown alga</name>
    <name type="synonym">Fucodium fastigiatum</name>
    <dbReference type="NCBI Taxonomy" id="48072"/>
    <lineage>
        <taxon>Eukaryota</taxon>
        <taxon>Sar</taxon>
        <taxon>Stramenopiles</taxon>
        <taxon>Ochrophyta</taxon>
        <taxon>PX clade</taxon>
        <taxon>Phaeophyceae</taxon>
        <taxon>Fucales</taxon>
        <taxon>Fucaceae</taxon>
        <taxon>Pelvetia</taxon>
    </lineage>
</organism>
<accession>Q40832</accession>
<evidence type="ECO:0000250" key="1"/>
<evidence type="ECO:0000250" key="2">
    <source>
        <dbReference type="UniProtKB" id="P68363"/>
    </source>
</evidence>
<evidence type="ECO:0000256" key="3">
    <source>
        <dbReference type="SAM" id="MobiDB-lite"/>
    </source>
</evidence>
<evidence type="ECO:0000305" key="4"/>
<reference key="1">
    <citation type="online journal article" date="1997" name="Plant Gene Register">
        <title>The brown alga, Pelvetia fastigiata, expresses two alpha-tubulin sequences.</title>
        <authorList>
            <person name="Coffman H.R."/>
            <person name="Kropf D.L."/>
        </authorList>
        <locator>PGR97-019</locator>
    </citation>
    <scope>NUCLEOTIDE SEQUENCE [MRNA]</scope>
</reference>
<feature type="chain" id="PRO_0000048212" description="Tubulin alpha-2 chain">
    <location>
        <begin position="1"/>
        <end position="453"/>
    </location>
</feature>
<feature type="region of interest" description="Disordered" evidence="3">
    <location>
        <begin position="432"/>
        <end position="453"/>
    </location>
</feature>
<feature type="active site" evidence="2">
    <location>
        <position position="254"/>
    </location>
</feature>
<feature type="binding site" evidence="2">
    <location>
        <position position="11"/>
    </location>
    <ligand>
        <name>GTP</name>
        <dbReference type="ChEBI" id="CHEBI:37565"/>
    </ligand>
</feature>
<feature type="binding site" evidence="2">
    <location>
        <position position="71"/>
    </location>
    <ligand>
        <name>GTP</name>
        <dbReference type="ChEBI" id="CHEBI:37565"/>
    </ligand>
</feature>
<feature type="binding site" evidence="2">
    <location>
        <position position="71"/>
    </location>
    <ligand>
        <name>Mg(2+)</name>
        <dbReference type="ChEBI" id="CHEBI:18420"/>
    </ligand>
</feature>
<feature type="binding site" evidence="2">
    <location>
        <position position="144"/>
    </location>
    <ligand>
        <name>GTP</name>
        <dbReference type="ChEBI" id="CHEBI:37565"/>
    </ligand>
</feature>
<feature type="binding site" evidence="2">
    <location>
        <position position="145"/>
    </location>
    <ligand>
        <name>GTP</name>
        <dbReference type="ChEBI" id="CHEBI:37565"/>
    </ligand>
</feature>
<feature type="binding site" evidence="2">
    <location>
        <position position="179"/>
    </location>
    <ligand>
        <name>GTP</name>
        <dbReference type="ChEBI" id="CHEBI:37565"/>
    </ligand>
</feature>
<feature type="binding site" evidence="2">
    <location>
        <position position="206"/>
    </location>
    <ligand>
        <name>GTP</name>
        <dbReference type="ChEBI" id="CHEBI:37565"/>
    </ligand>
</feature>
<feature type="binding site" evidence="2">
    <location>
        <position position="228"/>
    </location>
    <ligand>
        <name>GTP</name>
        <dbReference type="ChEBI" id="CHEBI:37565"/>
    </ligand>
</feature>
<feature type="site" description="Involved in polymerization">
    <location>
        <position position="453"/>
    </location>
</feature>
<feature type="modified residue" description="N6-acetyllysine" evidence="1">
    <location>
        <position position="40"/>
    </location>
</feature>
<name>TBA2_PELFA</name>
<dbReference type="EC" id="3.6.5.-" evidence="2"/>
<dbReference type="EMBL" id="U58642">
    <property type="protein sequence ID" value="AAB68032.1"/>
    <property type="molecule type" value="mRNA"/>
</dbReference>
<dbReference type="SMR" id="Q40832"/>
<dbReference type="GO" id="GO:0005737">
    <property type="term" value="C:cytoplasm"/>
    <property type="evidence" value="ECO:0007669"/>
    <property type="project" value="UniProtKB-KW"/>
</dbReference>
<dbReference type="GO" id="GO:0005874">
    <property type="term" value="C:microtubule"/>
    <property type="evidence" value="ECO:0007669"/>
    <property type="project" value="UniProtKB-KW"/>
</dbReference>
<dbReference type="GO" id="GO:0005525">
    <property type="term" value="F:GTP binding"/>
    <property type="evidence" value="ECO:0007669"/>
    <property type="project" value="UniProtKB-KW"/>
</dbReference>
<dbReference type="GO" id="GO:0016787">
    <property type="term" value="F:hydrolase activity"/>
    <property type="evidence" value="ECO:0007669"/>
    <property type="project" value="UniProtKB-KW"/>
</dbReference>
<dbReference type="GO" id="GO:0046872">
    <property type="term" value="F:metal ion binding"/>
    <property type="evidence" value="ECO:0007669"/>
    <property type="project" value="UniProtKB-KW"/>
</dbReference>
<dbReference type="GO" id="GO:0005200">
    <property type="term" value="F:structural constituent of cytoskeleton"/>
    <property type="evidence" value="ECO:0007669"/>
    <property type="project" value="InterPro"/>
</dbReference>
<dbReference type="GO" id="GO:0007017">
    <property type="term" value="P:microtubule-based process"/>
    <property type="evidence" value="ECO:0007669"/>
    <property type="project" value="InterPro"/>
</dbReference>
<dbReference type="CDD" id="cd02186">
    <property type="entry name" value="alpha_tubulin"/>
    <property type="match status" value="1"/>
</dbReference>
<dbReference type="FunFam" id="1.10.287.600:FF:000005">
    <property type="entry name" value="Tubulin alpha chain"/>
    <property type="match status" value="1"/>
</dbReference>
<dbReference type="FunFam" id="3.30.1330.20:FF:000001">
    <property type="entry name" value="Tubulin alpha chain"/>
    <property type="match status" value="1"/>
</dbReference>
<dbReference type="FunFam" id="3.40.50.1440:FF:000004">
    <property type="entry name" value="Tubulin alpha chain"/>
    <property type="match status" value="1"/>
</dbReference>
<dbReference type="Gene3D" id="1.10.287.600">
    <property type="entry name" value="Helix hairpin bin"/>
    <property type="match status" value="1"/>
</dbReference>
<dbReference type="Gene3D" id="3.30.1330.20">
    <property type="entry name" value="Tubulin/FtsZ, C-terminal domain"/>
    <property type="match status" value="1"/>
</dbReference>
<dbReference type="Gene3D" id="3.40.50.1440">
    <property type="entry name" value="Tubulin/FtsZ, GTPase domain"/>
    <property type="match status" value="1"/>
</dbReference>
<dbReference type="InterPro" id="IPR002452">
    <property type="entry name" value="Alpha_tubulin"/>
</dbReference>
<dbReference type="InterPro" id="IPR008280">
    <property type="entry name" value="Tub_FtsZ_C"/>
</dbReference>
<dbReference type="InterPro" id="IPR000217">
    <property type="entry name" value="Tubulin"/>
</dbReference>
<dbReference type="InterPro" id="IPR037103">
    <property type="entry name" value="Tubulin/FtsZ-like_C"/>
</dbReference>
<dbReference type="InterPro" id="IPR018316">
    <property type="entry name" value="Tubulin/FtsZ_2-layer-sand-dom"/>
</dbReference>
<dbReference type="InterPro" id="IPR036525">
    <property type="entry name" value="Tubulin/FtsZ_GTPase_sf"/>
</dbReference>
<dbReference type="InterPro" id="IPR023123">
    <property type="entry name" value="Tubulin_C"/>
</dbReference>
<dbReference type="InterPro" id="IPR017975">
    <property type="entry name" value="Tubulin_CS"/>
</dbReference>
<dbReference type="InterPro" id="IPR003008">
    <property type="entry name" value="Tubulin_FtsZ_GTPase"/>
</dbReference>
<dbReference type="PANTHER" id="PTHR11588">
    <property type="entry name" value="TUBULIN"/>
    <property type="match status" value="1"/>
</dbReference>
<dbReference type="Pfam" id="PF00091">
    <property type="entry name" value="Tubulin"/>
    <property type="match status" value="1"/>
</dbReference>
<dbReference type="Pfam" id="PF03953">
    <property type="entry name" value="Tubulin_C"/>
    <property type="match status" value="1"/>
</dbReference>
<dbReference type="PRINTS" id="PR01162">
    <property type="entry name" value="ALPHATUBULIN"/>
</dbReference>
<dbReference type="PRINTS" id="PR01161">
    <property type="entry name" value="TUBULIN"/>
</dbReference>
<dbReference type="SMART" id="SM00864">
    <property type="entry name" value="Tubulin"/>
    <property type="match status" value="1"/>
</dbReference>
<dbReference type="SMART" id="SM00865">
    <property type="entry name" value="Tubulin_C"/>
    <property type="match status" value="1"/>
</dbReference>
<dbReference type="SUPFAM" id="SSF55307">
    <property type="entry name" value="Tubulin C-terminal domain-like"/>
    <property type="match status" value="1"/>
</dbReference>
<dbReference type="SUPFAM" id="SSF52490">
    <property type="entry name" value="Tubulin nucleotide-binding domain-like"/>
    <property type="match status" value="1"/>
</dbReference>
<dbReference type="PROSITE" id="PS00227">
    <property type="entry name" value="TUBULIN"/>
    <property type="match status" value="1"/>
</dbReference>
<sequence length="453" mass="49980">MRECISIHIGQAGIQTGNACWELYCLEHGIQPDGQMPSDKTIGGGDDAFNTFFSETGAGKHVPRAVYVDLEPTVCDEVRTGTYRQLYHPEQIISGKEDAANNYARGHYTIGKEIVDLVLDRIRKLADNCTGLQGFLVFHATGGGTGSGLGSLLLERLSVDYGRKSKLSFAITPAPQVATAVVEPYNSVLSTHALLEHTDCTFCLDNEALYDVCRRNLDIERPTYTNLNRLVAQVISSLTASLRFDGALNVDVTEFQTNLVPYPRIHFMLTSYAPIISAEKAYHEQLSVAEITNSVFEPAGMMTNCDPRHGKYMACCLMYRGDVVPKDVNAAVATIKTKRTIQFVDWCPTGFKCGINYQPPTVVPGGDLARVQRAVCMVANTTAIAEALSRIDHKFDLMYAKRAFVHWYVGEGMEEGEFSEAREDLAALEKDYEEVGAETAEGEGEEEDFGEEY</sequence>
<gene>
    <name type="primary">TUBA2</name>
</gene>